<gene>
    <name evidence="2" type="primary">mutM</name>
    <name evidence="2" type="synonym">fpg</name>
    <name type="ordered locus">PP_5125</name>
</gene>
<keyword id="KW-0227">DNA damage</keyword>
<keyword id="KW-0234">DNA repair</keyword>
<keyword id="KW-0238">DNA-binding</keyword>
<keyword id="KW-0326">Glycosidase</keyword>
<keyword id="KW-0378">Hydrolase</keyword>
<keyword id="KW-0456">Lyase</keyword>
<keyword id="KW-0479">Metal-binding</keyword>
<keyword id="KW-0511">Multifunctional enzyme</keyword>
<keyword id="KW-1185">Reference proteome</keyword>
<keyword id="KW-0862">Zinc</keyword>
<keyword id="KW-0863">Zinc-finger</keyword>
<organism>
    <name type="scientific">Pseudomonas putida (strain ATCC 47054 / DSM 6125 / CFBP 8728 / NCIMB 11950 / KT2440)</name>
    <dbReference type="NCBI Taxonomy" id="160488"/>
    <lineage>
        <taxon>Bacteria</taxon>
        <taxon>Pseudomonadati</taxon>
        <taxon>Pseudomonadota</taxon>
        <taxon>Gammaproteobacteria</taxon>
        <taxon>Pseudomonadales</taxon>
        <taxon>Pseudomonadaceae</taxon>
        <taxon>Pseudomonas</taxon>
    </lineage>
</organism>
<feature type="initiator methionine" description="Removed" evidence="1">
    <location>
        <position position="1"/>
    </location>
</feature>
<feature type="chain" id="PRO_0000170853" description="Formamidopyrimidine-DNA glycosylase">
    <location>
        <begin position="2"/>
        <end position="270"/>
    </location>
</feature>
<feature type="zinc finger region" description="FPG-type" evidence="2">
    <location>
        <begin position="236"/>
        <end position="270"/>
    </location>
</feature>
<feature type="active site" description="Schiff-base intermediate with DNA" evidence="2">
    <location>
        <position position="2"/>
    </location>
</feature>
<feature type="active site" description="Proton donor" evidence="2">
    <location>
        <position position="3"/>
    </location>
</feature>
<feature type="active site" description="Proton donor; for beta-elimination activity" evidence="2">
    <location>
        <position position="58"/>
    </location>
</feature>
<feature type="active site" description="Proton donor; for delta-elimination activity" evidence="2">
    <location>
        <position position="260"/>
    </location>
</feature>
<feature type="binding site" evidence="2">
    <location>
        <position position="91"/>
    </location>
    <ligand>
        <name>DNA</name>
        <dbReference type="ChEBI" id="CHEBI:16991"/>
    </ligand>
</feature>
<feature type="binding site" evidence="2">
    <location>
        <position position="110"/>
    </location>
    <ligand>
        <name>DNA</name>
        <dbReference type="ChEBI" id="CHEBI:16991"/>
    </ligand>
</feature>
<feature type="binding site" evidence="2">
    <location>
        <position position="151"/>
    </location>
    <ligand>
        <name>DNA</name>
        <dbReference type="ChEBI" id="CHEBI:16991"/>
    </ligand>
</feature>
<reference key="1">
    <citation type="journal article" date="2002" name="Environ. Microbiol.">
        <title>Complete genome sequence and comparative analysis of the metabolically versatile Pseudomonas putida KT2440.</title>
        <authorList>
            <person name="Nelson K.E."/>
            <person name="Weinel C."/>
            <person name="Paulsen I.T."/>
            <person name="Dodson R.J."/>
            <person name="Hilbert H."/>
            <person name="Martins dos Santos V.A.P."/>
            <person name="Fouts D.E."/>
            <person name="Gill S.R."/>
            <person name="Pop M."/>
            <person name="Holmes M."/>
            <person name="Brinkac L.M."/>
            <person name="Beanan M.J."/>
            <person name="DeBoy R.T."/>
            <person name="Daugherty S.C."/>
            <person name="Kolonay J.F."/>
            <person name="Madupu R."/>
            <person name="Nelson W.C."/>
            <person name="White O."/>
            <person name="Peterson J.D."/>
            <person name="Khouri H.M."/>
            <person name="Hance I."/>
            <person name="Chris Lee P."/>
            <person name="Holtzapple E.K."/>
            <person name="Scanlan D."/>
            <person name="Tran K."/>
            <person name="Moazzez A."/>
            <person name="Utterback T.R."/>
            <person name="Rizzo M."/>
            <person name="Lee K."/>
            <person name="Kosack D."/>
            <person name="Moestl D."/>
            <person name="Wedler H."/>
            <person name="Lauber J."/>
            <person name="Stjepandic D."/>
            <person name="Hoheisel J."/>
            <person name="Straetz M."/>
            <person name="Heim S."/>
            <person name="Kiewitz C."/>
            <person name="Eisen J.A."/>
            <person name="Timmis K.N."/>
            <person name="Duesterhoeft A."/>
            <person name="Tuemmler B."/>
            <person name="Fraser C.M."/>
        </authorList>
    </citation>
    <scope>NUCLEOTIDE SEQUENCE [LARGE SCALE GENOMIC DNA]</scope>
    <source>
        <strain>ATCC 47054 / DSM 6125 / CFBP 8728 / NCIMB 11950 / KT2440</strain>
    </source>
</reference>
<proteinExistence type="inferred from homology"/>
<name>FPG_PSEPK</name>
<comment type="function">
    <text evidence="2">Involved in base excision repair of DNA damaged by oxidation or by mutagenic agents. Acts as a DNA glycosylase that recognizes and removes damaged bases. Has a preference for oxidized purines, such as 7,8-dihydro-8-oxoguanine (8-oxoG). Has AP (apurinic/apyrimidinic) lyase activity and introduces nicks in the DNA strand. Cleaves the DNA backbone by beta-delta elimination to generate a single-strand break at the site of the removed base with both 3'- and 5'-phosphates.</text>
</comment>
<comment type="catalytic activity">
    <reaction evidence="2">
        <text>Hydrolysis of DNA containing ring-opened 7-methylguanine residues, releasing 2,6-diamino-4-hydroxy-5-(N-methyl)formamidopyrimidine.</text>
        <dbReference type="EC" id="3.2.2.23"/>
    </reaction>
</comment>
<comment type="catalytic activity">
    <reaction evidence="2">
        <text>2'-deoxyribonucleotide-(2'-deoxyribose 5'-phosphate)-2'-deoxyribonucleotide-DNA = a 3'-end 2'-deoxyribonucleotide-(2,3-dehydro-2,3-deoxyribose 5'-phosphate)-DNA + a 5'-end 5'-phospho-2'-deoxyribonucleoside-DNA + H(+)</text>
        <dbReference type="Rhea" id="RHEA:66592"/>
        <dbReference type="Rhea" id="RHEA-COMP:13180"/>
        <dbReference type="Rhea" id="RHEA-COMP:16897"/>
        <dbReference type="Rhea" id="RHEA-COMP:17067"/>
        <dbReference type="ChEBI" id="CHEBI:15378"/>
        <dbReference type="ChEBI" id="CHEBI:136412"/>
        <dbReference type="ChEBI" id="CHEBI:157695"/>
        <dbReference type="ChEBI" id="CHEBI:167181"/>
        <dbReference type="EC" id="4.2.99.18"/>
    </reaction>
</comment>
<comment type="cofactor">
    <cofactor evidence="2">
        <name>Zn(2+)</name>
        <dbReference type="ChEBI" id="CHEBI:29105"/>
    </cofactor>
    <text evidence="2">Binds 1 zinc ion per subunit.</text>
</comment>
<comment type="subunit">
    <text evidence="2">Monomer.</text>
</comment>
<comment type="similarity">
    <text evidence="2">Belongs to the FPG family.</text>
</comment>
<evidence type="ECO:0000250" key="1"/>
<evidence type="ECO:0000255" key="2">
    <source>
        <dbReference type="HAMAP-Rule" id="MF_00103"/>
    </source>
</evidence>
<sequence length="270" mass="30178">MPELPEVETTRRGIAPHLEGQRVSRVVVRDRRLRWPIPEDLDVRLSGQRIVSVERRAKYLLINAEVGTLISHLGMSGNLRLVELGLPAAKHEHVDIELESGLMLRYTDPRRFGAMLWSLDPLNHELLLRLGPEPLTDLFDGERLFQLSRGRSMAVKPFIMDNAVVVGVGNIYATEALFAAGIDPRREAGGISRARYLKLAIEIKRVLAAAIEQGGTTLRDFIGGDGQPGYFQQELFVYGRGGQPCKVCGTELREVKLGQRASVYCPRCQR</sequence>
<protein>
    <recommendedName>
        <fullName evidence="2">Formamidopyrimidine-DNA glycosylase</fullName>
        <shortName evidence="2">Fapy-DNA glycosylase</shortName>
        <ecNumber evidence="2">3.2.2.23</ecNumber>
    </recommendedName>
    <alternativeName>
        <fullName evidence="2">DNA-(apurinic or apyrimidinic site) lyase MutM</fullName>
        <shortName evidence="2">AP lyase MutM</shortName>
        <ecNumber evidence="2">4.2.99.18</ecNumber>
    </alternativeName>
</protein>
<accession>Q88CQ5</accession>
<dbReference type="EC" id="3.2.2.23" evidence="2"/>
<dbReference type="EC" id="4.2.99.18" evidence="2"/>
<dbReference type="EMBL" id="AE015451">
    <property type="protein sequence ID" value="AAN70690.1"/>
    <property type="molecule type" value="Genomic_DNA"/>
</dbReference>
<dbReference type="RefSeq" id="NP_747226.1">
    <property type="nucleotide sequence ID" value="NC_002947.4"/>
</dbReference>
<dbReference type="RefSeq" id="WP_010955661.1">
    <property type="nucleotide sequence ID" value="NZ_CP169744.1"/>
</dbReference>
<dbReference type="SMR" id="Q88CQ5"/>
<dbReference type="STRING" id="160488.PP_5125"/>
<dbReference type="PaxDb" id="160488-PP_5125"/>
<dbReference type="GeneID" id="97170485"/>
<dbReference type="KEGG" id="ppu:PP_5125"/>
<dbReference type="PATRIC" id="fig|160488.4.peg.5470"/>
<dbReference type="eggNOG" id="COG0266">
    <property type="taxonomic scope" value="Bacteria"/>
</dbReference>
<dbReference type="HOGENOM" id="CLU_038423_1_1_6"/>
<dbReference type="OrthoDB" id="9800855at2"/>
<dbReference type="PhylomeDB" id="Q88CQ5"/>
<dbReference type="BioCyc" id="PPUT160488:G1G01-5469-MONOMER"/>
<dbReference type="Proteomes" id="UP000000556">
    <property type="component" value="Chromosome"/>
</dbReference>
<dbReference type="GO" id="GO:0034039">
    <property type="term" value="F:8-oxo-7,8-dihydroguanine DNA N-glycosylase activity"/>
    <property type="evidence" value="ECO:0007669"/>
    <property type="project" value="TreeGrafter"/>
</dbReference>
<dbReference type="GO" id="GO:0140078">
    <property type="term" value="F:class I DNA-(apurinic or apyrimidinic site) endonuclease activity"/>
    <property type="evidence" value="ECO:0007669"/>
    <property type="project" value="UniProtKB-EC"/>
</dbReference>
<dbReference type="GO" id="GO:0003684">
    <property type="term" value="F:damaged DNA binding"/>
    <property type="evidence" value="ECO:0007669"/>
    <property type="project" value="InterPro"/>
</dbReference>
<dbReference type="GO" id="GO:0008270">
    <property type="term" value="F:zinc ion binding"/>
    <property type="evidence" value="ECO:0007669"/>
    <property type="project" value="UniProtKB-UniRule"/>
</dbReference>
<dbReference type="GO" id="GO:0006284">
    <property type="term" value="P:base-excision repair"/>
    <property type="evidence" value="ECO:0007669"/>
    <property type="project" value="InterPro"/>
</dbReference>
<dbReference type="CDD" id="cd08966">
    <property type="entry name" value="EcFpg-like_N"/>
    <property type="match status" value="1"/>
</dbReference>
<dbReference type="FunFam" id="1.10.8.50:FF:000003">
    <property type="entry name" value="Formamidopyrimidine-DNA glycosylase"/>
    <property type="match status" value="1"/>
</dbReference>
<dbReference type="FunFam" id="3.20.190.10:FF:000001">
    <property type="entry name" value="Formamidopyrimidine-DNA glycosylase"/>
    <property type="match status" value="1"/>
</dbReference>
<dbReference type="Gene3D" id="1.10.8.50">
    <property type="match status" value="1"/>
</dbReference>
<dbReference type="Gene3D" id="3.20.190.10">
    <property type="entry name" value="MutM-like, N-terminal"/>
    <property type="match status" value="1"/>
</dbReference>
<dbReference type="HAMAP" id="MF_00103">
    <property type="entry name" value="Fapy_DNA_glycosyl"/>
    <property type="match status" value="1"/>
</dbReference>
<dbReference type="InterPro" id="IPR015886">
    <property type="entry name" value="DNA_glyclase/AP_lyase_DNA-bd"/>
</dbReference>
<dbReference type="InterPro" id="IPR015887">
    <property type="entry name" value="DNA_glyclase_Znf_dom_DNA_BS"/>
</dbReference>
<dbReference type="InterPro" id="IPR020629">
    <property type="entry name" value="Formamido-pyr_DNA_Glyclase"/>
</dbReference>
<dbReference type="InterPro" id="IPR012319">
    <property type="entry name" value="FPG_cat"/>
</dbReference>
<dbReference type="InterPro" id="IPR035937">
    <property type="entry name" value="MutM-like_N-ter"/>
</dbReference>
<dbReference type="InterPro" id="IPR010979">
    <property type="entry name" value="Ribosomal_uS13-like_H2TH"/>
</dbReference>
<dbReference type="InterPro" id="IPR000214">
    <property type="entry name" value="Znf_DNA_glyclase/AP_lyase"/>
</dbReference>
<dbReference type="InterPro" id="IPR010663">
    <property type="entry name" value="Znf_FPG/IleRS"/>
</dbReference>
<dbReference type="NCBIfam" id="TIGR00577">
    <property type="entry name" value="fpg"/>
    <property type="match status" value="1"/>
</dbReference>
<dbReference type="NCBIfam" id="NF002211">
    <property type="entry name" value="PRK01103.1"/>
    <property type="match status" value="1"/>
</dbReference>
<dbReference type="PANTHER" id="PTHR22993">
    <property type="entry name" value="FORMAMIDOPYRIMIDINE-DNA GLYCOSYLASE"/>
    <property type="match status" value="1"/>
</dbReference>
<dbReference type="PANTHER" id="PTHR22993:SF9">
    <property type="entry name" value="FORMAMIDOPYRIMIDINE-DNA GLYCOSYLASE"/>
    <property type="match status" value="1"/>
</dbReference>
<dbReference type="Pfam" id="PF01149">
    <property type="entry name" value="Fapy_DNA_glyco"/>
    <property type="match status" value="1"/>
</dbReference>
<dbReference type="Pfam" id="PF06831">
    <property type="entry name" value="H2TH"/>
    <property type="match status" value="1"/>
</dbReference>
<dbReference type="Pfam" id="PF06827">
    <property type="entry name" value="zf-FPG_IleRS"/>
    <property type="match status" value="1"/>
</dbReference>
<dbReference type="SMART" id="SM00898">
    <property type="entry name" value="Fapy_DNA_glyco"/>
    <property type="match status" value="1"/>
</dbReference>
<dbReference type="SMART" id="SM01232">
    <property type="entry name" value="H2TH"/>
    <property type="match status" value="1"/>
</dbReference>
<dbReference type="SUPFAM" id="SSF57716">
    <property type="entry name" value="Glucocorticoid receptor-like (DNA-binding domain)"/>
    <property type="match status" value="1"/>
</dbReference>
<dbReference type="SUPFAM" id="SSF81624">
    <property type="entry name" value="N-terminal domain of MutM-like DNA repair proteins"/>
    <property type="match status" value="1"/>
</dbReference>
<dbReference type="SUPFAM" id="SSF46946">
    <property type="entry name" value="S13-like H2TH domain"/>
    <property type="match status" value="1"/>
</dbReference>
<dbReference type="PROSITE" id="PS51068">
    <property type="entry name" value="FPG_CAT"/>
    <property type="match status" value="1"/>
</dbReference>
<dbReference type="PROSITE" id="PS01242">
    <property type="entry name" value="ZF_FPG_1"/>
    <property type="match status" value="1"/>
</dbReference>
<dbReference type="PROSITE" id="PS51066">
    <property type="entry name" value="ZF_FPG_2"/>
    <property type="match status" value="1"/>
</dbReference>